<accession>Q93HE4</accession>
<organism>
    <name type="scientific">Streptomyces avermitilis (strain ATCC 31267 / DSM 46492 / JCM 5070 / NBRC 14893 / NCIMB 12804 / NRRL 8165 / MA-4680)</name>
    <dbReference type="NCBI Taxonomy" id="227882"/>
    <lineage>
        <taxon>Bacteria</taxon>
        <taxon>Bacillati</taxon>
        <taxon>Actinomycetota</taxon>
        <taxon>Actinomycetes</taxon>
        <taxon>Kitasatosporales</taxon>
        <taxon>Streptomycetaceae</taxon>
        <taxon>Streptomyces</taxon>
    </lineage>
</organism>
<name>FABV_STRAW</name>
<comment type="function">
    <text evidence="1">Involved in the final reduction of the elongation cycle of fatty acid synthesis (FAS II). Catalyzes the reduction of a carbon-carbon double bond in an enoyl moiety that is covalently linked to an acyl carrier protein (ACP).</text>
</comment>
<comment type="catalytic activity">
    <reaction evidence="1">
        <text>a 2,3-saturated acyl-[ACP] + NAD(+) = a (2E)-enoyl-[ACP] + NADH + H(+)</text>
        <dbReference type="Rhea" id="RHEA:10240"/>
        <dbReference type="Rhea" id="RHEA-COMP:9925"/>
        <dbReference type="Rhea" id="RHEA-COMP:9926"/>
        <dbReference type="ChEBI" id="CHEBI:15378"/>
        <dbReference type="ChEBI" id="CHEBI:57540"/>
        <dbReference type="ChEBI" id="CHEBI:57945"/>
        <dbReference type="ChEBI" id="CHEBI:78784"/>
        <dbReference type="ChEBI" id="CHEBI:78785"/>
        <dbReference type="EC" id="1.3.1.9"/>
    </reaction>
</comment>
<comment type="pathway">
    <text evidence="1">Lipid metabolism; fatty acid biosynthesis.</text>
</comment>
<comment type="subunit">
    <text evidence="1">Monomer.</text>
</comment>
<comment type="similarity">
    <text evidence="1">Belongs to the TER reductase family.</text>
</comment>
<comment type="sequence caution" evidence="2">
    <conflict type="erroneous initiation">
        <sequence resource="EMBL-CDS" id="BAB69244"/>
    </conflict>
    <text>Extended N-terminus.</text>
</comment>
<comment type="sequence caution" evidence="2">
    <conflict type="erroneous initiation">
        <sequence resource="EMBL-CDS" id="BAC70078"/>
    </conflict>
    <text>Extended N-terminus.</text>
</comment>
<dbReference type="EC" id="1.3.1.9" evidence="1"/>
<dbReference type="EMBL" id="AB070945">
    <property type="protein sequence ID" value="BAB69244.1"/>
    <property type="status" value="ALT_INIT"/>
    <property type="molecule type" value="Genomic_DNA"/>
</dbReference>
<dbReference type="EMBL" id="BA000030">
    <property type="protein sequence ID" value="BAC70078.1"/>
    <property type="status" value="ALT_INIT"/>
    <property type="molecule type" value="Genomic_DNA"/>
</dbReference>
<dbReference type="SMR" id="Q93HE4"/>
<dbReference type="KEGG" id="sma:SAVERM_2367"/>
<dbReference type="eggNOG" id="COG3007">
    <property type="taxonomic scope" value="Bacteria"/>
</dbReference>
<dbReference type="HOGENOM" id="CLU_057698_1_0_11"/>
<dbReference type="UniPathway" id="UPA00094"/>
<dbReference type="Proteomes" id="UP000000428">
    <property type="component" value="Chromosome"/>
</dbReference>
<dbReference type="GO" id="GO:0004318">
    <property type="term" value="F:enoyl-[acyl-carrier-protein] reductase (NADH) activity"/>
    <property type="evidence" value="ECO:0007669"/>
    <property type="project" value="UniProtKB-UniRule"/>
</dbReference>
<dbReference type="GO" id="GO:0051287">
    <property type="term" value="F:NAD binding"/>
    <property type="evidence" value="ECO:0007669"/>
    <property type="project" value="UniProtKB-UniRule"/>
</dbReference>
<dbReference type="GO" id="GO:0050343">
    <property type="term" value="F:trans-2-enoyl-CoA reductase (NADH) activity"/>
    <property type="evidence" value="ECO:0007669"/>
    <property type="project" value="TreeGrafter"/>
</dbReference>
<dbReference type="GO" id="GO:0006633">
    <property type="term" value="P:fatty acid biosynthetic process"/>
    <property type="evidence" value="ECO:0007669"/>
    <property type="project" value="UniProtKB-UniRule"/>
</dbReference>
<dbReference type="Gene3D" id="3.40.50.720">
    <property type="entry name" value="NAD(P)-binding Rossmann-like Domain"/>
    <property type="match status" value="1"/>
</dbReference>
<dbReference type="HAMAP" id="MF_01838">
    <property type="entry name" value="FabV_reductase"/>
    <property type="match status" value="1"/>
</dbReference>
<dbReference type="InterPro" id="IPR024906">
    <property type="entry name" value="Eno_Rdtase_FAD-bd_dom"/>
</dbReference>
<dbReference type="InterPro" id="IPR024910">
    <property type="entry name" value="Enoyl-CoA_Rdtase_cat_dom"/>
</dbReference>
<dbReference type="InterPro" id="IPR050048">
    <property type="entry name" value="FabV-like_NADH_b"/>
</dbReference>
<dbReference type="InterPro" id="IPR010758">
    <property type="entry name" value="Trans-2-enoyl-CoA_reductase"/>
</dbReference>
<dbReference type="NCBIfam" id="NF010177">
    <property type="entry name" value="PRK13656.1"/>
    <property type="match status" value="1"/>
</dbReference>
<dbReference type="PANTHER" id="PTHR37480">
    <property type="entry name" value="ENOYL-[ACYL-CARRIER-PROTEIN] REDUCTASE [NADH]"/>
    <property type="match status" value="1"/>
</dbReference>
<dbReference type="PANTHER" id="PTHR37480:SF1">
    <property type="entry name" value="ENOYL-[ACYL-CARRIER-PROTEIN] REDUCTASE [NADH]"/>
    <property type="match status" value="1"/>
</dbReference>
<dbReference type="Pfam" id="PF07055">
    <property type="entry name" value="Eno-Rase_FAD_bd"/>
    <property type="match status" value="1"/>
</dbReference>
<dbReference type="Pfam" id="PF12242">
    <property type="entry name" value="Eno-Rase_NADH_b"/>
    <property type="match status" value="1"/>
</dbReference>
<dbReference type="Pfam" id="PF12241">
    <property type="entry name" value="Enoyl_reductase"/>
    <property type="match status" value="1"/>
</dbReference>
<proteinExistence type="inferred from homology"/>
<reference key="1">
    <citation type="journal article" date="2001" name="Proc. Natl. Acad. Sci. U.S.A.">
        <title>Genome sequence of an industrial microorganism Streptomyces avermitilis: deducing the ability of producing secondary metabolites.</title>
        <authorList>
            <person name="Omura S."/>
            <person name="Ikeda H."/>
            <person name="Ishikawa J."/>
            <person name="Hanamoto A."/>
            <person name="Takahashi C."/>
            <person name="Shinose M."/>
            <person name="Takahashi Y."/>
            <person name="Horikawa H."/>
            <person name="Nakazawa H."/>
            <person name="Osonoe T."/>
            <person name="Kikuchi H."/>
            <person name="Shiba T."/>
            <person name="Sakaki Y."/>
            <person name="Hattori M."/>
        </authorList>
    </citation>
    <scope>NUCLEOTIDE SEQUENCE [LARGE SCALE GENOMIC DNA]</scope>
    <source>
        <strain>ATCC 31267 / DSM 46492 / JCM 5070 / NBRC 14893 / NCIMB 12804 / NRRL 8165 / MA-4680</strain>
    </source>
</reference>
<reference key="2">
    <citation type="journal article" date="2003" name="Nat. Biotechnol.">
        <title>Complete genome sequence and comparative analysis of the industrial microorganism Streptomyces avermitilis.</title>
        <authorList>
            <person name="Ikeda H."/>
            <person name="Ishikawa J."/>
            <person name="Hanamoto A."/>
            <person name="Shinose M."/>
            <person name="Kikuchi H."/>
            <person name="Shiba T."/>
            <person name="Sakaki Y."/>
            <person name="Hattori M."/>
            <person name="Omura S."/>
        </authorList>
    </citation>
    <scope>NUCLEOTIDE SEQUENCE [LARGE SCALE GENOMIC DNA]</scope>
    <source>
        <strain>ATCC 31267 / DSM 46492 / JCM 5070 / NBRC 14893 / NCIMB 12804 / NRRL 8165 / MA-4680</strain>
    </source>
</reference>
<gene>
    <name evidence="1" type="primary">fabV</name>
    <name type="ordered locus">SAV_2367</name>
</gene>
<feature type="chain" id="PRO_0000220049" description="Enoyl-[acyl-carrier-protein] reductase [NADH]">
    <location>
        <begin position="1"/>
        <end position="392"/>
    </location>
</feature>
<feature type="active site" description="Proton donor" evidence="1">
    <location>
        <position position="235"/>
    </location>
</feature>
<feature type="binding site" evidence="1">
    <location>
        <begin position="46"/>
        <end position="51"/>
    </location>
    <ligand>
        <name>NAD(+)</name>
        <dbReference type="ChEBI" id="CHEBI:57540"/>
    </ligand>
</feature>
<feature type="binding site" evidence="1">
    <location>
        <begin position="72"/>
        <end position="73"/>
    </location>
    <ligand>
        <name>NAD(+)</name>
        <dbReference type="ChEBI" id="CHEBI:57540"/>
    </ligand>
</feature>
<feature type="binding site" evidence="1">
    <location>
        <begin position="108"/>
        <end position="109"/>
    </location>
    <ligand>
        <name>NAD(+)</name>
        <dbReference type="ChEBI" id="CHEBI:57540"/>
    </ligand>
</feature>
<feature type="binding site" evidence="1">
    <location>
        <begin position="136"/>
        <end position="137"/>
    </location>
    <ligand>
        <name>NAD(+)</name>
        <dbReference type="ChEBI" id="CHEBI:57540"/>
    </ligand>
</feature>
<feature type="binding site" evidence="1">
    <location>
        <position position="225"/>
    </location>
    <ligand>
        <name>substrate</name>
    </ligand>
</feature>
<feature type="binding site" evidence="1">
    <location>
        <position position="244"/>
    </location>
    <ligand>
        <name>NAD(+)</name>
        <dbReference type="ChEBI" id="CHEBI:57540"/>
    </ligand>
</feature>
<feature type="binding site" evidence="1">
    <location>
        <begin position="273"/>
        <end position="275"/>
    </location>
    <ligand>
        <name>NAD(+)</name>
        <dbReference type="ChEBI" id="CHEBI:57540"/>
    </ligand>
</feature>
<feature type="site" description="Plays an important role in discriminating NADH against NADPH" evidence="1">
    <location>
        <position position="73"/>
    </location>
</feature>
<protein>
    <recommendedName>
        <fullName evidence="1">Enoyl-[acyl-carrier-protein] reductase [NADH]</fullName>
        <shortName evidence="1">ENR</shortName>
        <ecNumber evidence="1">1.3.1.9</ecNumber>
    </recommendedName>
</protein>
<evidence type="ECO:0000255" key="1">
    <source>
        <dbReference type="HAMAP-Rule" id="MF_01838"/>
    </source>
</evidence>
<evidence type="ECO:0000305" key="2"/>
<keyword id="KW-0275">Fatty acid biosynthesis</keyword>
<keyword id="KW-0276">Fatty acid metabolism</keyword>
<keyword id="KW-0444">Lipid biosynthesis</keyword>
<keyword id="KW-0443">Lipid metabolism</keyword>
<keyword id="KW-0520">NAD</keyword>
<keyword id="KW-0560">Oxidoreductase</keyword>
<keyword id="KW-1185">Reference proteome</keyword>
<sequence>MKPTGRGYLLLDAHPVGCFRSVELMRAEVPVPEKPPARRPTALVIGSSSGYGLASTIAGLVRYGIDGVGIGLERPAGHRSATAGWYRTVATDAIARELGADFSFRNADAFADTTKTETLDLLAERFGGVDYLIYSVAAPRRTDPRSGTTYQSVLKPLGAPHTTRNLEFADDGAAQVREVTVAPATEAEAAATVGVMGGEDWSRWITALAERGLLRSGFRTVALTYIGSPLTSAIYRGGTIGAAKAHLESTARALTERLAAVDGRAFTSVNGALVTQALTAIPGIPLYVSLLRGVLGDRFPSPVAQSLDLWHQLTARRPDVDDSGRIRLDRWELSEPVQAAVAERWRSITPETVTALADTAWFRAQCRALYGFDVPGVDYTVPVATDLPWPES</sequence>